<protein>
    <recommendedName>
        <fullName>Mite group 2 allergen Gly d 2.01</fullName>
    </recommendedName>
    <allergenName>Gly d 2.01</allergenName>
</protein>
<name>ALL21_GLYDO</name>
<evidence type="ECO:0000305" key="1"/>
<feature type="chain" id="PRO_0000221048" description="Mite group 2 allergen Gly d 2.01">
    <location>
        <begin position="1"/>
        <end position="128"/>
    </location>
</feature>
<proteinExistence type="evidence at protein level"/>
<accession>Q9U5P7</accession>
<organism>
    <name type="scientific">Glycyphagus domesticus</name>
    <name type="common">House itch mite</name>
    <name type="synonym">Acarus domesticus</name>
    <dbReference type="NCBI Taxonomy" id="105145"/>
    <lineage>
        <taxon>Eukaryota</taxon>
        <taxon>Metazoa</taxon>
        <taxon>Ecdysozoa</taxon>
        <taxon>Arthropoda</taxon>
        <taxon>Chelicerata</taxon>
        <taxon>Arachnida</taxon>
        <taxon>Acari</taxon>
        <taxon>Acariformes</taxon>
        <taxon>Sarcoptiformes</taxon>
        <taxon>Astigmata</taxon>
        <taxon>Glycyphagoidea</taxon>
        <taxon>Glycyphagidae</taxon>
        <taxon>Glycyphagus</taxon>
    </lineage>
</organism>
<keyword id="KW-0020">Allergen</keyword>
<keyword id="KW-0903">Direct protein sequencing</keyword>
<keyword id="KW-0964">Secreted</keyword>
<sequence length="128" mass="13790">GKMNFTDCGHNEIKELSVSNCTGNYCVIHRGKPLTLDAKFDANQDTASVGLVLTAIIDGDIAIDIPGLETNACKLMKCPIRKGEHQELIYNIGEIPDATPEIKAKVKAQLIGEHGVLACGWVDGEVQE</sequence>
<reference key="1">
    <citation type="journal article" date="2001" name="J. Allergy Clin. Immunol.">
        <title>Cross-reactivity studies of a new group 2 allergen from the dust mite Glycyphagus domesticus, Gly d 2, and group 2 allergens from Dermatophagoides pteronyssinus, Lepidoglyphus destructor, and Tyrophagus putrescentiae with recombinant allergens.</title>
        <authorList>
            <person name="Gafvelin G."/>
            <person name="Johansson E."/>
            <person name="Lundin A."/>
            <person name="Smith A.M."/>
            <person name="Chapman M.D."/>
            <person name="Benjamin D.C."/>
            <person name="Derewenda U."/>
            <person name="van Hage-Hamsten M."/>
        </authorList>
    </citation>
    <scope>NUCLEOTIDE SEQUENCE [MRNA]</scope>
    <scope>PROTEIN SEQUENCE OF 1-18</scope>
</reference>
<dbReference type="EMBL" id="AJ249864">
    <property type="protein sequence ID" value="CAB59976.1"/>
    <property type="molecule type" value="mRNA"/>
</dbReference>
<dbReference type="SMR" id="Q9U5P7"/>
<dbReference type="Allergome" id="365">
    <property type="allergen name" value="Gly d 2"/>
</dbReference>
<dbReference type="Allergome" id="366">
    <property type="allergen name" value="Gly d 2.0101"/>
</dbReference>
<dbReference type="GO" id="GO:0005576">
    <property type="term" value="C:extracellular region"/>
    <property type="evidence" value="ECO:0007669"/>
    <property type="project" value="UniProtKB-SubCell"/>
</dbReference>
<dbReference type="CDD" id="cd00918">
    <property type="entry name" value="Der-p2_like"/>
    <property type="match status" value="1"/>
</dbReference>
<dbReference type="FunFam" id="2.60.40.770:FF:000001">
    <property type="entry name" value="NPC intracellular cholesterol transporter 2"/>
    <property type="match status" value="1"/>
</dbReference>
<dbReference type="Gene3D" id="2.60.40.770">
    <property type="match status" value="1"/>
</dbReference>
<dbReference type="InterPro" id="IPR014756">
    <property type="entry name" value="Ig_E-set"/>
</dbReference>
<dbReference type="InterPro" id="IPR003172">
    <property type="entry name" value="ML_dom"/>
</dbReference>
<dbReference type="Pfam" id="PF02221">
    <property type="entry name" value="E1_DerP2_DerF2"/>
    <property type="match status" value="1"/>
</dbReference>
<dbReference type="SMART" id="SM00737">
    <property type="entry name" value="ML"/>
    <property type="match status" value="1"/>
</dbReference>
<dbReference type="SUPFAM" id="SSF81296">
    <property type="entry name" value="E set domains"/>
    <property type="match status" value="1"/>
</dbReference>
<comment type="subcellular location">
    <subcellularLocation>
        <location>Secreted</location>
    </subcellularLocation>
</comment>
<comment type="allergen">
    <text>Causes an allergic reaction in human. Common symptoms of mite allergy are bronchial asthma, allergic rhinitis and conjunctivitis.</text>
</comment>
<comment type="similarity">
    <text evidence="1">Belongs to the NPC2 family.</text>
</comment>